<comment type="function">
    <text evidence="2">Can catalyze the hydrolysis of ATP in the presence of single-stranded DNA, the ATP-dependent uptake of single-stranded DNA by duplex DNA, and the ATP-dependent hybridization of homologous single-stranded DNAs. It interacts with LexA causing its activation and leading to its autocatalytic cleavage.</text>
</comment>
<comment type="subcellular location">
    <subcellularLocation>
        <location evidence="2">Cytoplasm</location>
    </subcellularLocation>
</comment>
<comment type="similarity">
    <text evidence="2">Belongs to the RecA family.</text>
</comment>
<feature type="initiator methionine" description="Removed" evidence="1">
    <location>
        <position position="1"/>
    </location>
</feature>
<feature type="chain" id="PRO_0000122826" description="Protein RecA">
    <location>
        <begin position="2"/>
        <end position="353"/>
    </location>
</feature>
<feature type="binding site" evidence="2">
    <location>
        <begin position="67"/>
        <end position="74"/>
    </location>
    <ligand>
        <name>ATP</name>
        <dbReference type="ChEBI" id="CHEBI:30616"/>
    </ligand>
</feature>
<name>RECA_SALCH</name>
<reference key="1">
    <citation type="journal article" date="2005" name="Nucleic Acids Res.">
        <title>The genome sequence of Salmonella enterica serovar Choleraesuis, a highly invasive and resistant zoonotic pathogen.</title>
        <authorList>
            <person name="Chiu C.-H."/>
            <person name="Tang P."/>
            <person name="Chu C."/>
            <person name="Hu S."/>
            <person name="Bao Q."/>
            <person name="Yu J."/>
            <person name="Chou Y.-Y."/>
            <person name="Wang H.-S."/>
            <person name="Lee Y.-S."/>
        </authorList>
    </citation>
    <scope>NUCLEOTIDE SEQUENCE [LARGE SCALE GENOMIC DNA]</scope>
    <source>
        <strain>SC-B67</strain>
    </source>
</reference>
<protein>
    <recommendedName>
        <fullName evidence="2">Protein RecA</fullName>
    </recommendedName>
    <alternativeName>
        <fullName evidence="2">Recombinase A</fullName>
    </alternativeName>
</protein>
<dbReference type="EMBL" id="AE017220">
    <property type="protein sequence ID" value="AAX66668.1"/>
    <property type="molecule type" value="Genomic_DNA"/>
</dbReference>
<dbReference type="RefSeq" id="WP_000963150.1">
    <property type="nucleotide sequence ID" value="NC_006905.1"/>
</dbReference>
<dbReference type="SMR" id="Q57KU4"/>
<dbReference type="KEGG" id="sec:SCH_2762"/>
<dbReference type="HOGENOM" id="CLU_040469_3_2_6"/>
<dbReference type="Proteomes" id="UP000000538">
    <property type="component" value="Chromosome"/>
</dbReference>
<dbReference type="GO" id="GO:0005829">
    <property type="term" value="C:cytosol"/>
    <property type="evidence" value="ECO:0007669"/>
    <property type="project" value="TreeGrafter"/>
</dbReference>
<dbReference type="GO" id="GO:0005524">
    <property type="term" value="F:ATP binding"/>
    <property type="evidence" value="ECO:0007669"/>
    <property type="project" value="UniProtKB-UniRule"/>
</dbReference>
<dbReference type="GO" id="GO:0016887">
    <property type="term" value="F:ATP hydrolysis activity"/>
    <property type="evidence" value="ECO:0007669"/>
    <property type="project" value="InterPro"/>
</dbReference>
<dbReference type="GO" id="GO:0140664">
    <property type="term" value="F:ATP-dependent DNA damage sensor activity"/>
    <property type="evidence" value="ECO:0007669"/>
    <property type="project" value="InterPro"/>
</dbReference>
<dbReference type="GO" id="GO:0003684">
    <property type="term" value="F:damaged DNA binding"/>
    <property type="evidence" value="ECO:0007669"/>
    <property type="project" value="UniProtKB-UniRule"/>
</dbReference>
<dbReference type="GO" id="GO:0003697">
    <property type="term" value="F:single-stranded DNA binding"/>
    <property type="evidence" value="ECO:0007669"/>
    <property type="project" value="UniProtKB-UniRule"/>
</dbReference>
<dbReference type="GO" id="GO:0006310">
    <property type="term" value="P:DNA recombination"/>
    <property type="evidence" value="ECO:0007669"/>
    <property type="project" value="UniProtKB-UniRule"/>
</dbReference>
<dbReference type="GO" id="GO:0006281">
    <property type="term" value="P:DNA repair"/>
    <property type="evidence" value="ECO:0007669"/>
    <property type="project" value="UniProtKB-UniRule"/>
</dbReference>
<dbReference type="GO" id="GO:0009432">
    <property type="term" value="P:SOS response"/>
    <property type="evidence" value="ECO:0007669"/>
    <property type="project" value="UniProtKB-UniRule"/>
</dbReference>
<dbReference type="CDD" id="cd00983">
    <property type="entry name" value="RecA"/>
    <property type="match status" value="1"/>
</dbReference>
<dbReference type="FunFam" id="3.40.50.300:FF:000087">
    <property type="entry name" value="Recombinase RecA"/>
    <property type="match status" value="1"/>
</dbReference>
<dbReference type="Gene3D" id="3.40.50.300">
    <property type="entry name" value="P-loop containing nucleotide triphosphate hydrolases"/>
    <property type="match status" value="1"/>
</dbReference>
<dbReference type="HAMAP" id="MF_00268">
    <property type="entry name" value="RecA"/>
    <property type="match status" value="1"/>
</dbReference>
<dbReference type="InterPro" id="IPR003593">
    <property type="entry name" value="AAA+_ATPase"/>
</dbReference>
<dbReference type="InterPro" id="IPR013765">
    <property type="entry name" value="DNA_recomb/repair_RecA"/>
</dbReference>
<dbReference type="InterPro" id="IPR020584">
    <property type="entry name" value="DNA_recomb/repair_RecA_CS"/>
</dbReference>
<dbReference type="InterPro" id="IPR027417">
    <property type="entry name" value="P-loop_NTPase"/>
</dbReference>
<dbReference type="InterPro" id="IPR049261">
    <property type="entry name" value="RecA-like_C"/>
</dbReference>
<dbReference type="InterPro" id="IPR049428">
    <property type="entry name" value="RecA-like_N"/>
</dbReference>
<dbReference type="InterPro" id="IPR020588">
    <property type="entry name" value="RecA_ATP-bd"/>
</dbReference>
<dbReference type="InterPro" id="IPR023400">
    <property type="entry name" value="RecA_C_sf"/>
</dbReference>
<dbReference type="InterPro" id="IPR020587">
    <property type="entry name" value="RecA_monomer-monomer_interface"/>
</dbReference>
<dbReference type="NCBIfam" id="TIGR02012">
    <property type="entry name" value="tigrfam_recA"/>
    <property type="match status" value="1"/>
</dbReference>
<dbReference type="PANTHER" id="PTHR45900:SF1">
    <property type="entry name" value="MITOCHONDRIAL DNA REPAIR PROTEIN RECA HOMOLOG-RELATED"/>
    <property type="match status" value="1"/>
</dbReference>
<dbReference type="PANTHER" id="PTHR45900">
    <property type="entry name" value="RECA"/>
    <property type="match status" value="1"/>
</dbReference>
<dbReference type="Pfam" id="PF00154">
    <property type="entry name" value="RecA"/>
    <property type="match status" value="1"/>
</dbReference>
<dbReference type="Pfam" id="PF21096">
    <property type="entry name" value="RecA_C"/>
    <property type="match status" value="1"/>
</dbReference>
<dbReference type="PRINTS" id="PR00142">
    <property type="entry name" value="RECA"/>
</dbReference>
<dbReference type="SMART" id="SM00382">
    <property type="entry name" value="AAA"/>
    <property type="match status" value="1"/>
</dbReference>
<dbReference type="SUPFAM" id="SSF52540">
    <property type="entry name" value="P-loop containing nucleoside triphosphate hydrolases"/>
    <property type="match status" value="1"/>
</dbReference>
<dbReference type="SUPFAM" id="SSF54752">
    <property type="entry name" value="RecA protein, C-terminal domain"/>
    <property type="match status" value="1"/>
</dbReference>
<dbReference type="PROSITE" id="PS00321">
    <property type="entry name" value="RECA_1"/>
    <property type="match status" value="1"/>
</dbReference>
<dbReference type="PROSITE" id="PS50162">
    <property type="entry name" value="RECA_2"/>
    <property type="match status" value="1"/>
</dbReference>
<dbReference type="PROSITE" id="PS50163">
    <property type="entry name" value="RECA_3"/>
    <property type="match status" value="1"/>
</dbReference>
<sequence length="353" mass="37944">MAIDENKQKALAAALGQIEKQFGKGSIMRLGEDRSMDVETISTGSLSLDIALGAGGLPMGRIVEIYGPESSGKTTLTLQVIAAAQREGKTCAFIDAEHALDPVYARKLGVDIDNLLCSQPDTGEQALEICDALARSGAVDVIVVDSVAALTPKAEIEGEIGDSHMGLAARMMSQAMRKLAGNLKQSNTLLIFINQIRMKIGVMFGNPETTTGGNALKFYASVRLDIRRIGAVKEGDNVVGSETRVKVVKNKIAAPFKQAEFQILYGEGINFYGELVDLGVKEKLIEKAGAWYSYNGEKIGQGKANATTWLKENPATAKEIEKRVRELLLSNQNATPDFAVDDSEGVAETNEDF</sequence>
<evidence type="ECO:0000250" key="1"/>
<evidence type="ECO:0000255" key="2">
    <source>
        <dbReference type="HAMAP-Rule" id="MF_00268"/>
    </source>
</evidence>
<organism>
    <name type="scientific">Salmonella choleraesuis (strain SC-B67)</name>
    <dbReference type="NCBI Taxonomy" id="321314"/>
    <lineage>
        <taxon>Bacteria</taxon>
        <taxon>Pseudomonadati</taxon>
        <taxon>Pseudomonadota</taxon>
        <taxon>Gammaproteobacteria</taxon>
        <taxon>Enterobacterales</taxon>
        <taxon>Enterobacteriaceae</taxon>
        <taxon>Salmonella</taxon>
    </lineage>
</organism>
<keyword id="KW-0067">ATP-binding</keyword>
<keyword id="KW-0963">Cytoplasm</keyword>
<keyword id="KW-0227">DNA damage</keyword>
<keyword id="KW-0233">DNA recombination</keyword>
<keyword id="KW-0234">DNA repair</keyword>
<keyword id="KW-0238">DNA-binding</keyword>
<keyword id="KW-0547">Nucleotide-binding</keyword>
<keyword id="KW-0742">SOS response</keyword>
<accession>Q57KU4</accession>
<proteinExistence type="inferred from homology"/>
<gene>
    <name evidence="2" type="primary">recA</name>
    <name type="ordered locus">SCH_2762</name>
</gene>